<organism>
    <name type="scientific">Buchnera aphidicola subsp. Acyrthosiphon pisum (strain 5A)</name>
    <dbReference type="NCBI Taxonomy" id="563178"/>
    <lineage>
        <taxon>Bacteria</taxon>
        <taxon>Pseudomonadati</taxon>
        <taxon>Pseudomonadota</taxon>
        <taxon>Gammaproteobacteria</taxon>
        <taxon>Enterobacterales</taxon>
        <taxon>Erwiniaceae</taxon>
        <taxon>Buchnera</taxon>
    </lineage>
</organism>
<dbReference type="EMBL" id="CP001161">
    <property type="protein sequence ID" value="ACL30778.1"/>
    <property type="molecule type" value="Genomic_DNA"/>
</dbReference>
<dbReference type="RefSeq" id="WP_009874382.1">
    <property type="nucleotide sequence ID" value="NC_011833.1"/>
</dbReference>
<dbReference type="SMR" id="B8D9K7"/>
<dbReference type="KEGG" id="bap:BUAP5A_422"/>
<dbReference type="HOGENOM" id="CLU_002472_4_0_6"/>
<dbReference type="OrthoDB" id="9802448at2"/>
<dbReference type="Proteomes" id="UP000006904">
    <property type="component" value="Chromosome"/>
</dbReference>
<dbReference type="GO" id="GO:0005829">
    <property type="term" value="C:cytosol"/>
    <property type="evidence" value="ECO:0007669"/>
    <property type="project" value="TreeGrafter"/>
</dbReference>
<dbReference type="GO" id="GO:0005524">
    <property type="term" value="F:ATP binding"/>
    <property type="evidence" value="ECO:0007669"/>
    <property type="project" value="UniProtKB-UniRule"/>
</dbReference>
<dbReference type="GO" id="GO:0140664">
    <property type="term" value="F:ATP-dependent DNA damage sensor activity"/>
    <property type="evidence" value="ECO:0007669"/>
    <property type="project" value="InterPro"/>
</dbReference>
<dbReference type="GO" id="GO:0003684">
    <property type="term" value="F:damaged DNA binding"/>
    <property type="evidence" value="ECO:0007669"/>
    <property type="project" value="UniProtKB-UniRule"/>
</dbReference>
<dbReference type="GO" id="GO:0030983">
    <property type="term" value="F:mismatched DNA binding"/>
    <property type="evidence" value="ECO:0007669"/>
    <property type="project" value="InterPro"/>
</dbReference>
<dbReference type="GO" id="GO:0006298">
    <property type="term" value="P:mismatch repair"/>
    <property type="evidence" value="ECO:0007669"/>
    <property type="project" value="UniProtKB-UniRule"/>
</dbReference>
<dbReference type="FunFam" id="1.10.1420.10:FF:000001">
    <property type="entry name" value="DNA mismatch repair protein MutS"/>
    <property type="match status" value="1"/>
</dbReference>
<dbReference type="FunFam" id="3.40.1170.10:FF:000001">
    <property type="entry name" value="DNA mismatch repair protein MutS"/>
    <property type="match status" value="1"/>
</dbReference>
<dbReference type="FunFam" id="3.40.50.300:FF:000870">
    <property type="entry name" value="MutS protein homolog 4"/>
    <property type="match status" value="1"/>
</dbReference>
<dbReference type="Gene3D" id="1.10.1420.10">
    <property type="match status" value="2"/>
</dbReference>
<dbReference type="Gene3D" id="3.40.1170.10">
    <property type="entry name" value="DNA repair protein MutS, domain I"/>
    <property type="match status" value="1"/>
</dbReference>
<dbReference type="Gene3D" id="3.30.420.110">
    <property type="entry name" value="MutS, connector domain"/>
    <property type="match status" value="1"/>
</dbReference>
<dbReference type="Gene3D" id="3.40.50.300">
    <property type="entry name" value="P-loop containing nucleotide triphosphate hydrolases"/>
    <property type="match status" value="1"/>
</dbReference>
<dbReference type="HAMAP" id="MF_00096">
    <property type="entry name" value="MutS"/>
    <property type="match status" value="1"/>
</dbReference>
<dbReference type="InterPro" id="IPR005748">
    <property type="entry name" value="DNA_mismatch_repair_MutS"/>
</dbReference>
<dbReference type="InterPro" id="IPR007695">
    <property type="entry name" value="DNA_mismatch_repair_MutS-lik_N"/>
</dbReference>
<dbReference type="InterPro" id="IPR017261">
    <property type="entry name" value="DNA_mismatch_repair_MutS/MSH"/>
</dbReference>
<dbReference type="InterPro" id="IPR000432">
    <property type="entry name" value="DNA_mismatch_repair_MutS_C"/>
</dbReference>
<dbReference type="InterPro" id="IPR007861">
    <property type="entry name" value="DNA_mismatch_repair_MutS_clamp"/>
</dbReference>
<dbReference type="InterPro" id="IPR007696">
    <property type="entry name" value="DNA_mismatch_repair_MutS_core"/>
</dbReference>
<dbReference type="InterPro" id="IPR016151">
    <property type="entry name" value="DNA_mismatch_repair_MutS_N"/>
</dbReference>
<dbReference type="InterPro" id="IPR036187">
    <property type="entry name" value="DNA_mismatch_repair_MutS_sf"/>
</dbReference>
<dbReference type="InterPro" id="IPR007860">
    <property type="entry name" value="DNA_mmatch_repair_MutS_con_dom"/>
</dbReference>
<dbReference type="InterPro" id="IPR045076">
    <property type="entry name" value="MutS"/>
</dbReference>
<dbReference type="InterPro" id="IPR036678">
    <property type="entry name" value="MutS_con_dom_sf"/>
</dbReference>
<dbReference type="InterPro" id="IPR027417">
    <property type="entry name" value="P-loop_NTPase"/>
</dbReference>
<dbReference type="NCBIfam" id="TIGR01070">
    <property type="entry name" value="mutS1"/>
    <property type="match status" value="1"/>
</dbReference>
<dbReference type="NCBIfam" id="NF003810">
    <property type="entry name" value="PRK05399.1"/>
    <property type="match status" value="1"/>
</dbReference>
<dbReference type="PANTHER" id="PTHR11361:SF34">
    <property type="entry name" value="DNA MISMATCH REPAIR PROTEIN MSH1, MITOCHONDRIAL"/>
    <property type="match status" value="1"/>
</dbReference>
<dbReference type="PANTHER" id="PTHR11361">
    <property type="entry name" value="DNA MISMATCH REPAIR PROTEIN MUTS FAMILY MEMBER"/>
    <property type="match status" value="1"/>
</dbReference>
<dbReference type="Pfam" id="PF01624">
    <property type="entry name" value="MutS_I"/>
    <property type="match status" value="1"/>
</dbReference>
<dbReference type="Pfam" id="PF05188">
    <property type="entry name" value="MutS_II"/>
    <property type="match status" value="1"/>
</dbReference>
<dbReference type="Pfam" id="PF05192">
    <property type="entry name" value="MutS_III"/>
    <property type="match status" value="1"/>
</dbReference>
<dbReference type="Pfam" id="PF05190">
    <property type="entry name" value="MutS_IV"/>
    <property type="match status" value="1"/>
</dbReference>
<dbReference type="Pfam" id="PF00488">
    <property type="entry name" value="MutS_V"/>
    <property type="match status" value="1"/>
</dbReference>
<dbReference type="PIRSF" id="PIRSF037677">
    <property type="entry name" value="DNA_mis_repair_Msh6"/>
    <property type="match status" value="1"/>
</dbReference>
<dbReference type="SMART" id="SM00534">
    <property type="entry name" value="MUTSac"/>
    <property type="match status" value="1"/>
</dbReference>
<dbReference type="SMART" id="SM00533">
    <property type="entry name" value="MUTSd"/>
    <property type="match status" value="1"/>
</dbReference>
<dbReference type="SUPFAM" id="SSF55271">
    <property type="entry name" value="DNA repair protein MutS, domain I"/>
    <property type="match status" value="1"/>
</dbReference>
<dbReference type="SUPFAM" id="SSF53150">
    <property type="entry name" value="DNA repair protein MutS, domain II"/>
    <property type="match status" value="1"/>
</dbReference>
<dbReference type="SUPFAM" id="SSF48334">
    <property type="entry name" value="DNA repair protein MutS, domain III"/>
    <property type="match status" value="1"/>
</dbReference>
<dbReference type="SUPFAM" id="SSF52540">
    <property type="entry name" value="P-loop containing nucleoside triphosphate hydrolases"/>
    <property type="match status" value="1"/>
</dbReference>
<dbReference type="PROSITE" id="PS00486">
    <property type="entry name" value="DNA_MISMATCH_REPAIR_2"/>
    <property type="match status" value="1"/>
</dbReference>
<evidence type="ECO:0000255" key="1">
    <source>
        <dbReference type="HAMAP-Rule" id="MF_00096"/>
    </source>
</evidence>
<accession>B8D9K7</accession>
<gene>
    <name evidence="1" type="primary">mutS</name>
    <name type="ordered locus">BUAP5A_422</name>
</gene>
<name>MUTS_BUCA5</name>
<comment type="function">
    <text evidence="1">This protein is involved in the repair of mismatches in DNA. It is possible that it carries out the mismatch recognition step. This protein has a weak ATPase activity.</text>
</comment>
<comment type="similarity">
    <text evidence="1">Belongs to the DNA mismatch repair MutS family.</text>
</comment>
<proteinExistence type="inferred from homology"/>
<keyword id="KW-0067">ATP-binding</keyword>
<keyword id="KW-0227">DNA damage</keyword>
<keyword id="KW-0234">DNA repair</keyword>
<keyword id="KW-0238">DNA-binding</keyword>
<keyword id="KW-0547">Nucleotide-binding</keyword>
<sequence length="802" mass="92589">MKKKNIKNSMNNHTPMIKQYLSLKSQYPDMLLFYQMGDFYELFYEDAERISELLKITLTKKGYSNHKIIPMAGVPCHKSEYYLSKLVKLGESIAICDQQKETDCKKKLISRKVVRIITPGTVTDEVLLEENEDNFIAAIWKENNQFGYSVLDLSLGFFGVSKIFSSCDLLSEIERTNPKEILYPENFSDVFLIESRKCIRKRSLLEFDLETSYKLLNLQFNTCSLDGFGIEKNNFVIRAAGCLLQYVKSMNMTVLPNIRQLKYNYMEDSIFMNFSTRKSLEITQNISGEKKNTLSAILNKTVTSMGSRMLNRWLNSPLKNFKIVRNRHESVEALKFFYKELQFILRQVNDLERIYSRLALRTASPHDFVRMRSTLEILPNLHLILKKIKSKHIKKIRLSIGYFEEVLCLLKKAISLKPSKCIRDGGVIAELYNIELDELRSIKINSKEYIKNFEQKEKKKLMIESFKIKFNKIIGYYIQISKRHTHLIPKYYVIIQTLKNTERYSVPLLKEYEEKVLNSEMRSLLLEKKLYAEIFNIIEPFLEKLQNSALALSELDVLVNLSERAISLNYTRPIMSEKYGISLLESRHPVVECFLKTPFIKNSVFLSRTQRMIIITGPNMGGKSTYMRQIALIVIMAGIGSFVPARYALIGSIDKIFTRIGSADDLSNGYSTFMMEMMEISNILHNATSNSLVLIDELGRGTSTNEGLSLAWSCSRYLININKSMTLLSTHFVELTKLEEKEKFVKNFHFSAIKSDLHIAFLYKIKNGISKKSYGISVASLSGLPDSVLEDAEKKLIEIENT</sequence>
<feature type="chain" id="PRO_1000192200" description="DNA mismatch repair protein MutS">
    <location>
        <begin position="1"/>
        <end position="802"/>
    </location>
</feature>
<feature type="binding site" evidence="1">
    <location>
        <begin position="617"/>
        <end position="624"/>
    </location>
    <ligand>
        <name>ATP</name>
        <dbReference type="ChEBI" id="CHEBI:30616"/>
    </ligand>
</feature>
<reference key="1">
    <citation type="journal article" date="2009" name="Science">
        <title>The dynamics and time scale of ongoing genomic erosion in symbiotic bacteria.</title>
        <authorList>
            <person name="Moran N.A."/>
            <person name="McLaughlin H.J."/>
            <person name="Sorek R."/>
        </authorList>
    </citation>
    <scope>NUCLEOTIDE SEQUENCE [LARGE SCALE GENOMIC DNA]</scope>
    <source>
        <strain>5A</strain>
    </source>
</reference>
<protein>
    <recommendedName>
        <fullName evidence="1">DNA mismatch repair protein MutS</fullName>
    </recommendedName>
</protein>